<comment type="function">
    <text evidence="1">Tetrapolymerization of the monopyrrole PBG into the hydroxymethylbilane pre-uroporphyrinogen in several discrete steps.</text>
</comment>
<comment type="catalytic activity">
    <reaction evidence="1">
        <text>4 porphobilinogen + H2O = hydroxymethylbilane + 4 NH4(+)</text>
        <dbReference type="Rhea" id="RHEA:13185"/>
        <dbReference type="ChEBI" id="CHEBI:15377"/>
        <dbReference type="ChEBI" id="CHEBI:28938"/>
        <dbReference type="ChEBI" id="CHEBI:57845"/>
        <dbReference type="ChEBI" id="CHEBI:58126"/>
        <dbReference type="EC" id="2.5.1.61"/>
    </reaction>
</comment>
<comment type="cofactor">
    <cofactor evidence="1">
        <name>dipyrromethane</name>
        <dbReference type="ChEBI" id="CHEBI:60342"/>
    </cofactor>
    <text evidence="1">Binds 1 dipyrromethane group covalently.</text>
</comment>
<comment type="pathway">
    <text evidence="1">Porphyrin-containing compound metabolism; protoporphyrin-IX biosynthesis; coproporphyrinogen-III from 5-aminolevulinate: step 2/4.</text>
</comment>
<comment type="subunit">
    <text evidence="1">Monomer.</text>
</comment>
<comment type="miscellaneous">
    <text evidence="1">The porphobilinogen subunits are added to the dipyrromethane group.</text>
</comment>
<comment type="similarity">
    <text evidence="1">Belongs to the HMBS family.</text>
</comment>
<name>HEM3_SULDN</name>
<reference key="1">
    <citation type="journal article" date="2008" name="Appl. Environ. Microbiol.">
        <title>Genome of the epsilonproteobacterial chemolithoautotroph Sulfurimonas denitrificans.</title>
        <authorList>
            <person name="Sievert S.M."/>
            <person name="Scott K.M."/>
            <person name="Klotz M.G."/>
            <person name="Chain P.S.G."/>
            <person name="Hauser L.J."/>
            <person name="Hemp J."/>
            <person name="Huegler M."/>
            <person name="Land M."/>
            <person name="Lapidus A."/>
            <person name="Larimer F.W."/>
            <person name="Lucas S."/>
            <person name="Malfatti S.A."/>
            <person name="Meyer F."/>
            <person name="Paulsen I.T."/>
            <person name="Ren Q."/>
            <person name="Simon J."/>
            <person name="Bailey K."/>
            <person name="Diaz E."/>
            <person name="Fitzpatrick K.A."/>
            <person name="Glover B."/>
            <person name="Gwatney N."/>
            <person name="Korajkic A."/>
            <person name="Long A."/>
            <person name="Mobberley J.M."/>
            <person name="Pantry S.N."/>
            <person name="Pazder G."/>
            <person name="Peterson S."/>
            <person name="Quintanilla J.D."/>
            <person name="Sprinkle R."/>
            <person name="Stephens J."/>
            <person name="Thomas P."/>
            <person name="Vaughn R."/>
            <person name="Weber M.J."/>
            <person name="Wooten L.L."/>
        </authorList>
    </citation>
    <scope>NUCLEOTIDE SEQUENCE [LARGE SCALE GENOMIC DNA]</scope>
    <source>
        <strain>ATCC 33889 / DSM 1251</strain>
    </source>
</reference>
<protein>
    <recommendedName>
        <fullName evidence="1">Porphobilinogen deaminase</fullName>
        <shortName evidence="1">PBG</shortName>
        <ecNumber evidence="1">2.5.1.61</ecNumber>
    </recommendedName>
    <alternativeName>
        <fullName evidence="1">Hydroxymethylbilane synthase</fullName>
        <shortName evidence="1">HMBS</shortName>
    </alternativeName>
    <alternativeName>
        <fullName evidence="1">Pre-uroporphyrinogen synthase</fullName>
    </alternativeName>
</protein>
<dbReference type="EC" id="2.5.1.61" evidence="1"/>
<dbReference type="EMBL" id="CP000153">
    <property type="protein sequence ID" value="ABB44141.1"/>
    <property type="molecule type" value="Genomic_DNA"/>
</dbReference>
<dbReference type="RefSeq" id="WP_011372493.1">
    <property type="nucleotide sequence ID" value="NC_007575.1"/>
</dbReference>
<dbReference type="SMR" id="Q30S90"/>
<dbReference type="STRING" id="326298.Suden_0863"/>
<dbReference type="KEGG" id="tdn:Suden_0863"/>
<dbReference type="eggNOG" id="COG0181">
    <property type="taxonomic scope" value="Bacteria"/>
</dbReference>
<dbReference type="HOGENOM" id="CLU_019704_0_2_7"/>
<dbReference type="OrthoDB" id="9810298at2"/>
<dbReference type="UniPathway" id="UPA00251">
    <property type="reaction ID" value="UER00319"/>
</dbReference>
<dbReference type="Proteomes" id="UP000002714">
    <property type="component" value="Chromosome"/>
</dbReference>
<dbReference type="GO" id="GO:0005737">
    <property type="term" value="C:cytoplasm"/>
    <property type="evidence" value="ECO:0007669"/>
    <property type="project" value="TreeGrafter"/>
</dbReference>
<dbReference type="GO" id="GO:0004418">
    <property type="term" value="F:hydroxymethylbilane synthase activity"/>
    <property type="evidence" value="ECO:0007669"/>
    <property type="project" value="UniProtKB-UniRule"/>
</dbReference>
<dbReference type="GO" id="GO:0006782">
    <property type="term" value="P:protoporphyrinogen IX biosynthetic process"/>
    <property type="evidence" value="ECO:0007669"/>
    <property type="project" value="UniProtKB-UniRule"/>
</dbReference>
<dbReference type="CDD" id="cd13646">
    <property type="entry name" value="PBP2_EcHMBS_like"/>
    <property type="match status" value="1"/>
</dbReference>
<dbReference type="FunFam" id="3.40.190.10:FF:000004">
    <property type="entry name" value="Porphobilinogen deaminase"/>
    <property type="match status" value="1"/>
</dbReference>
<dbReference type="FunFam" id="3.40.190.10:FF:000005">
    <property type="entry name" value="Porphobilinogen deaminase"/>
    <property type="match status" value="1"/>
</dbReference>
<dbReference type="Gene3D" id="3.40.190.10">
    <property type="entry name" value="Periplasmic binding protein-like II"/>
    <property type="match status" value="2"/>
</dbReference>
<dbReference type="Gene3D" id="3.30.160.40">
    <property type="entry name" value="Porphobilinogen deaminase, C-terminal domain"/>
    <property type="match status" value="1"/>
</dbReference>
<dbReference type="HAMAP" id="MF_00260">
    <property type="entry name" value="Porphobil_deam"/>
    <property type="match status" value="1"/>
</dbReference>
<dbReference type="InterPro" id="IPR000860">
    <property type="entry name" value="HemC"/>
</dbReference>
<dbReference type="InterPro" id="IPR022419">
    <property type="entry name" value="Porphobilin_deaminase_cofac_BS"/>
</dbReference>
<dbReference type="InterPro" id="IPR022417">
    <property type="entry name" value="Porphobilin_deaminase_N"/>
</dbReference>
<dbReference type="InterPro" id="IPR022418">
    <property type="entry name" value="Porphobilinogen_deaminase_C"/>
</dbReference>
<dbReference type="InterPro" id="IPR036803">
    <property type="entry name" value="Porphobilinogen_deaminase_C_sf"/>
</dbReference>
<dbReference type="NCBIfam" id="TIGR00212">
    <property type="entry name" value="hemC"/>
    <property type="match status" value="1"/>
</dbReference>
<dbReference type="PANTHER" id="PTHR11557">
    <property type="entry name" value="PORPHOBILINOGEN DEAMINASE"/>
    <property type="match status" value="1"/>
</dbReference>
<dbReference type="PANTHER" id="PTHR11557:SF0">
    <property type="entry name" value="PORPHOBILINOGEN DEAMINASE"/>
    <property type="match status" value="1"/>
</dbReference>
<dbReference type="Pfam" id="PF01379">
    <property type="entry name" value="Porphobil_deam"/>
    <property type="match status" value="1"/>
</dbReference>
<dbReference type="Pfam" id="PF03900">
    <property type="entry name" value="Porphobil_deamC"/>
    <property type="match status" value="1"/>
</dbReference>
<dbReference type="PIRSF" id="PIRSF001438">
    <property type="entry name" value="4pyrrol_synth_OHMeBilane_synth"/>
    <property type="match status" value="1"/>
</dbReference>
<dbReference type="PRINTS" id="PR00151">
    <property type="entry name" value="PORPHBDMNASE"/>
</dbReference>
<dbReference type="SUPFAM" id="SSF53850">
    <property type="entry name" value="Periplasmic binding protein-like II"/>
    <property type="match status" value="1"/>
</dbReference>
<dbReference type="SUPFAM" id="SSF54782">
    <property type="entry name" value="Porphobilinogen deaminase (hydroxymethylbilane synthase), C-terminal domain"/>
    <property type="match status" value="1"/>
</dbReference>
<dbReference type="PROSITE" id="PS00533">
    <property type="entry name" value="PORPHOBILINOGEN_DEAM"/>
    <property type="match status" value="1"/>
</dbReference>
<sequence>MKKLVIATRGSQLALWQSNHIKAILQEQNPGLEVELNVIVTTGDRIQDKALSKIGGKGLFLKELEEAMLQGEAQIAVHSLKDVPTVMPDGLILAAITEREDSRDALLSEKYANIDALPKNAVVGTSSLRRRMQIQKLRPDLIIKDLRGNVDTRIRKLKEGEFDAIILAAAGINRLSLLDAVKHVYPISLEEMVPSMGQGALGIEAVNDAEVLRIVAGLEDEYSRIETTIERSFVDELEGGCQVPIGVNASVLDDGTISIRAVLGLPNGEEMLSDSKITSKKDYENIGREIAAEFIEKGAKELLSRAEAMMENK</sequence>
<evidence type="ECO:0000255" key="1">
    <source>
        <dbReference type="HAMAP-Rule" id="MF_00260"/>
    </source>
</evidence>
<proteinExistence type="inferred from homology"/>
<organism>
    <name type="scientific">Sulfurimonas denitrificans (strain ATCC 33889 / DSM 1251)</name>
    <name type="common">Thiomicrospira denitrificans (strain ATCC 33889 / DSM 1251)</name>
    <dbReference type="NCBI Taxonomy" id="326298"/>
    <lineage>
        <taxon>Bacteria</taxon>
        <taxon>Pseudomonadati</taxon>
        <taxon>Campylobacterota</taxon>
        <taxon>Epsilonproteobacteria</taxon>
        <taxon>Campylobacterales</taxon>
        <taxon>Sulfurimonadaceae</taxon>
        <taxon>Sulfurimonas</taxon>
    </lineage>
</organism>
<accession>Q30S90</accession>
<keyword id="KW-0627">Porphyrin biosynthesis</keyword>
<keyword id="KW-1185">Reference proteome</keyword>
<keyword id="KW-0808">Transferase</keyword>
<feature type="chain" id="PRO_0000304290" description="Porphobilinogen deaminase">
    <location>
        <begin position="1"/>
        <end position="313"/>
    </location>
</feature>
<feature type="modified residue" description="S-(dipyrrolylmethanemethyl)cysteine" evidence="1">
    <location>
        <position position="241"/>
    </location>
</feature>
<gene>
    <name evidence="1" type="primary">hemC</name>
    <name type="ordered locus">Suden_0863</name>
</gene>